<comment type="function">
    <text evidence="1">Synthesizes alpha-1,4-glucan chains using ADP-glucose.</text>
</comment>
<comment type="catalytic activity">
    <reaction evidence="1">
        <text>[(1-&gt;4)-alpha-D-glucosyl](n) + ADP-alpha-D-glucose = [(1-&gt;4)-alpha-D-glucosyl](n+1) + ADP + H(+)</text>
        <dbReference type="Rhea" id="RHEA:18189"/>
        <dbReference type="Rhea" id="RHEA-COMP:9584"/>
        <dbReference type="Rhea" id="RHEA-COMP:9587"/>
        <dbReference type="ChEBI" id="CHEBI:15378"/>
        <dbReference type="ChEBI" id="CHEBI:15444"/>
        <dbReference type="ChEBI" id="CHEBI:57498"/>
        <dbReference type="ChEBI" id="CHEBI:456216"/>
        <dbReference type="EC" id="2.4.1.21"/>
    </reaction>
</comment>
<comment type="pathway">
    <text evidence="1">Glycan biosynthesis; glycogen biosynthesis.</text>
</comment>
<comment type="similarity">
    <text evidence="1">Belongs to the glycosyltransferase 1 family. Bacterial/plant glycogen synthase subfamily.</text>
</comment>
<sequence length="477" mass="54159">MKILFVAAEGAPFSKTGGLGDVIGALPKSLVKAGHEVAVILPYYDMVEAKFGNQIEDVLHFEVSVGWRRQYCGIKKTVLNGVTFYFIDNQYYFFRGHVYGDFDDGERFAFFQLAAIEAMERIDFIPDLLHVHDYHTAMIPFLLKEKYRWIQAYEDIETVLTIHNLEFQGQFSEGMLGDLFGVGFERYADGTLRWNNCLNWMKAGILYANRVSTVSPSYAHEIMTSQFGCNLDQILKMESGKVSGIVNGIDADLYNPQTDALLDYHFNQEDLSGKAKNKAKLQERVGLPVRADVPLVGIVSRLTRQKGFDVVVESLHHILQEDVQIVLLGTGDPAFEGAFSWFAQIYPDKLSTNITFDVKLAQEIYAACDLFLMPSRFEPCGLSQMMAMRYGTLPLVHEVGGLRDTVRAFNPIEGSGTGFSFDNLSPYWLNWTFQTALDLYRNHPDIWRNLQKQAMESDFSWDTACKSYLDLYHSLVN</sequence>
<evidence type="ECO:0000255" key="1">
    <source>
        <dbReference type="HAMAP-Rule" id="MF_00484"/>
    </source>
</evidence>
<name>GLGA_STRPN</name>
<dbReference type="EC" id="2.4.1.21" evidence="1"/>
<dbReference type="EMBL" id="AE005672">
    <property type="protein sequence ID" value="AAK75235.1"/>
    <property type="molecule type" value="Genomic_DNA"/>
</dbReference>
<dbReference type="PIR" id="B95130">
    <property type="entry name" value="B95130"/>
</dbReference>
<dbReference type="RefSeq" id="WP_000697295.1">
    <property type="nucleotide sequence ID" value="NZ_CP155539.1"/>
</dbReference>
<dbReference type="SMR" id="Q97QS5"/>
<dbReference type="CAZy" id="GT5">
    <property type="family name" value="Glycosyltransferase Family 5"/>
</dbReference>
<dbReference type="PaxDb" id="170187-SP_1124"/>
<dbReference type="EnsemblBacteria" id="AAK75235">
    <property type="protein sequence ID" value="AAK75235"/>
    <property type="gene ID" value="SP_1124"/>
</dbReference>
<dbReference type="KEGG" id="spn:SP_1124"/>
<dbReference type="eggNOG" id="COG0297">
    <property type="taxonomic scope" value="Bacteria"/>
</dbReference>
<dbReference type="PhylomeDB" id="Q97QS5"/>
<dbReference type="BioCyc" id="SPNE170187:G1FZB-1148-MONOMER"/>
<dbReference type="UniPathway" id="UPA00164"/>
<dbReference type="Proteomes" id="UP000000585">
    <property type="component" value="Chromosome"/>
</dbReference>
<dbReference type="GO" id="GO:0009011">
    <property type="term" value="F:alpha-1,4-glucan glucosyltransferase (ADP-glucose donor) activity"/>
    <property type="evidence" value="ECO:0007669"/>
    <property type="project" value="UniProtKB-UniRule"/>
</dbReference>
<dbReference type="GO" id="GO:0004373">
    <property type="term" value="F:alpha-1,4-glucan glucosyltransferase (UDP-glucose donor) activity"/>
    <property type="evidence" value="ECO:0007669"/>
    <property type="project" value="InterPro"/>
</dbReference>
<dbReference type="GO" id="GO:0005978">
    <property type="term" value="P:glycogen biosynthetic process"/>
    <property type="evidence" value="ECO:0007669"/>
    <property type="project" value="UniProtKB-UniRule"/>
</dbReference>
<dbReference type="CDD" id="cd03791">
    <property type="entry name" value="GT5_Glycogen_synthase_DULL1-like"/>
    <property type="match status" value="1"/>
</dbReference>
<dbReference type="Gene3D" id="3.40.50.2000">
    <property type="entry name" value="Glycogen Phosphorylase B"/>
    <property type="match status" value="2"/>
</dbReference>
<dbReference type="HAMAP" id="MF_00484">
    <property type="entry name" value="Glycogen_synth"/>
    <property type="match status" value="1"/>
</dbReference>
<dbReference type="InterPro" id="IPR001296">
    <property type="entry name" value="Glyco_trans_1"/>
</dbReference>
<dbReference type="InterPro" id="IPR011835">
    <property type="entry name" value="GS/SS"/>
</dbReference>
<dbReference type="InterPro" id="IPR013534">
    <property type="entry name" value="Starch_synth_cat_dom"/>
</dbReference>
<dbReference type="NCBIfam" id="TIGR02095">
    <property type="entry name" value="glgA"/>
    <property type="match status" value="1"/>
</dbReference>
<dbReference type="NCBIfam" id="NF001898">
    <property type="entry name" value="PRK00654.1-1"/>
    <property type="match status" value="1"/>
</dbReference>
<dbReference type="PANTHER" id="PTHR45825:SF11">
    <property type="entry name" value="ALPHA AMYLASE DOMAIN-CONTAINING PROTEIN"/>
    <property type="match status" value="1"/>
</dbReference>
<dbReference type="PANTHER" id="PTHR45825">
    <property type="entry name" value="GRANULE-BOUND STARCH SYNTHASE 1, CHLOROPLASTIC/AMYLOPLASTIC"/>
    <property type="match status" value="1"/>
</dbReference>
<dbReference type="Pfam" id="PF08323">
    <property type="entry name" value="Glyco_transf_5"/>
    <property type="match status" value="1"/>
</dbReference>
<dbReference type="Pfam" id="PF00534">
    <property type="entry name" value="Glycos_transf_1"/>
    <property type="match status" value="1"/>
</dbReference>
<dbReference type="SUPFAM" id="SSF53756">
    <property type="entry name" value="UDP-Glycosyltransferase/glycogen phosphorylase"/>
    <property type="match status" value="1"/>
</dbReference>
<feature type="chain" id="PRO_0000188649" description="Glycogen synthase">
    <location>
        <begin position="1"/>
        <end position="477"/>
    </location>
</feature>
<feature type="binding site" evidence="1">
    <location>
        <position position="15"/>
    </location>
    <ligand>
        <name>ADP-alpha-D-glucose</name>
        <dbReference type="ChEBI" id="CHEBI:57498"/>
    </ligand>
</feature>
<keyword id="KW-0320">Glycogen biosynthesis</keyword>
<keyword id="KW-0328">Glycosyltransferase</keyword>
<keyword id="KW-1185">Reference proteome</keyword>
<keyword id="KW-0808">Transferase</keyword>
<reference key="1">
    <citation type="journal article" date="2001" name="Science">
        <title>Complete genome sequence of a virulent isolate of Streptococcus pneumoniae.</title>
        <authorList>
            <person name="Tettelin H."/>
            <person name="Nelson K.E."/>
            <person name="Paulsen I.T."/>
            <person name="Eisen J.A."/>
            <person name="Read T.D."/>
            <person name="Peterson S.N."/>
            <person name="Heidelberg J.F."/>
            <person name="DeBoy R.T."/>
            <person name="Haft D.H."/>
            <person name="Dodson R.J."/>
            <person name="Durkin A.S."/>
            <person name="Gwinn M.L."/>
            <person name="Kolonay J.F."/>
            <person name="Nelson W.C."/>
            <person name="Peterson J.D."/>
            <person name="Umayam L.A."/>
            <person name="White O."/>
            <person name="Salzberg S.L."/>
            <person name="Lewis M.R."/>
            <person name="Radune D."/>
            <person name="Holtzapple E.K."/>
            <person name="Khouri H.M."/>
            <person name="Wolf A.M."/>
            <person name="Utterback T.R."/>
            <person name="Hansen C.L."/>
            <person name="McDonald L.A."/>
            <person name="Feldblyum T.V."/>
            <person name="Angiuoli S.V."/>
            <person name="Dickinson T."/>
            <person name="Hickey E.K."/>
            <person name="Holt I.E."/>
            <person name="Loftus B.J."/>
            <person name="Yang F."/>
            <person name="Smith H.O."/>
            <person name="Venter J.C."/>
            <person name="Dougherty B.A."/>
            <person name="Morrison D.A."/>
            <person name="Hollingshead S.K."/>
            <person name="Fraser C.M."/>
        </authorList>
    </citation>
    <scope>NUCLEOTIDE SEQUENCE [LARGE SCALE GENOMIC DNA]</scope>
    <source>
        <strain>ATCC BAA-334 / TIGR4</strain>
    </source>
</reference>
<accession>Q97QS5</accession>
<gene>
    <name evidence="1" type="primary">glgA</name>
    <name type="ordered locus">SP_1124</name>
</gene>
<organism>
    <name type="scientific">Streptococcus pneumoniae serotype 4 (strain ATCC BAA-334 / TIGR4)</name>
    <dbReference type="NCBI Taxonomy" id="170187"/>
    <lineage>
        <taxon>Bacteria</taxon>
        <taxon>Bacillati</taxon>
        <taxon>Bacillota</taxon>
        <taxon>Bacilli</taxon>
        <taxon>Lactobacillales</taxon>
        <taxon>Streptococcaceae</taxon>
        <taxon>Streptococcus</taxon>
    </lineage>
</organism>
<protein>
    <recommendedName>
        <fullName evidence="1">Glycogen synthase</fullName>
        <ecNumber evidence="1">2.4.1.21</ecNumber>
    </recommendedName>
    <alternativeName>
        <fullName evidence="1">Starch [bacterial glycogen] synthase</fullName>
    </alternativeName>
</protein>
<proteinExistence type="inferred from homology"/>